<protein>
    <recommendedName>
        <fullName>Hornerin</fullName>
    </recommendedName>
</protein>
<name>HORN_HUMAN</name>
<organism>
    <name type="scientific">Homo sapiens</name>
    <name type="common">Human</name>
    <dbReference type="NCBI Taxonomy" id="9606"/>
    <lineage>
        <taxon>Eukaryota</taxon>
        <taxon>Metazoa</taxon>
        <taxon>Chordata</taxon>
        <taxon>Craniata</taxon>
        <taxon>Vertebrata</taxon>
        <taxon>Euteleostomi</taxon>
        <taxon>Mammalia</taxon>
        <taxon>Eutheria</taxon>
        <taxon>Euarchontoglires</taxon>
        <taxon>Primates</taxon>
        <taxon>Haplorrhini</taxon>
        <taxon>Catarrhini</taxon>
        <taxon>Hominidae</taxon>
        <taxon>Homo</taxon>
    </lineage>
</organism>
<proteinExistence type="evidence at protein level"/>
<sequence length="2850" mass="282390">MPKLLQGVITVIDVFYQYATQHGEYDTLNKAELKELLENEFHQILKNPNDPDTVDIILQSLDRDHNKKVDFTEYLLMIFKLVQARNKIIGKDYCQVSGSKLRDDTHQHQEEQEETEKEENKRQESSFSHSSWSAGENDSYSRNVRGSLKPGTESISRRLSFQRDFSGQHNSYSGQSSSYGEQNSDSHQSSGRGQCGSGSGQSPNYGQHGSGSGQSSSNDTHGSGSGQSSGFSQHKSSSGQSSGYSQHGSGSGHSSGYGQHGSRSGQSSRGERHRSSSGSSSSYGQHGSGSRQSLGHGRQGSGSRQSPSHVRHGSGSGHSSSHGQHGSGSSYSYSRGHYESGSGQTSGFGQHESGSGQSSGYSKHGSGSGHSSSQGQHGSTSGQASSSGQHGSSSRQSSSYGQHESASRHSSGRGQHSSGSGQSPGHGQRGSGSGQSPSSGQHGTGFGRSSSSGPYVSGSGYSSGFGHHESSSEHSSGYTQHGSGSGHSSGHGQHGSRSGQSSRGERQGSSAGSSSSYGQHGSGSRQSLGHSRHGSGSGQSPSPSRGRHESGSRQSSSYGPHGYGSGRSSSRGPYESGSGHSSGLGHQESRSGQSSGYGQHGSSSGHSSTHGQHGSTSGQSSSCGQHGATSGQSSSHGQHGSGSSQSSRYGQQGSGSGQSPSRGRHGSDFGHSSSYGQHGSGSGWSSSNGPHGSVSGQSSGFGHKSGSGQSSGYSQHGSGSSHSSGYRKHGSRSGQSSRSEQHGSSSGLSSSYGQHGSGSHQSSGHGRQGSGSGHSPSRVRHGSSSGHSSSHGQHGSGTSCSSSCGHYESGSGQASGFGQHESGSGQGYSQHGSASGHFSSQGRHGSTSGQSSSSGQHDSSSGQSSSYGQHESASHHASGRGRHGSGSGQSPGHGQRGSGSGQSPSYGRHGSGSGRSSSSGRHGSGSGQSSGFGHKSSSGQSSGYTQHGSGSGHSSSYEQHGSRSGQSSRSEQHGSSSGSSSSYGQHGSGSRQSLGHGQHGSGSGQSPSPSRGRHGSGSGQSSSYGPYRSGSGWSSSRGPYESGSGHSSGLGHRESRSGQSSGYGQHGSSSGHSSTHGQHGSTSGQSSSCGQHGASSGQSSSHGQHGSGSSQSSGYGRQGSGSGQSPGHGQRGSGSRQSPSYGRHGSGSGRSSSSGQHGSGLGESSGFGHHESSSGQSSSYSQHGSGSGHSSGYGQHGSRSGQSSRGERHGSSSGSSSHYGQHGSGSRQSSGHGRQGSGSGHSPSRGRHGSGLGHSSSHGQHGSGSGRSSSRGPYESRSGHSSVFGQHESGSGHSSAYSQHGSGSGHFCSQGQHGSTSGQSSTFDQEGSSTGQSSSYGHRGSGSSQSSGYGRHGAGSGQSPSRGRHGSGSGHSSSYGQHGSGSGWSSSSGRHGSGSGQSSGFGHHESSSWQSSGCTQHGSGSGHSSSYEQHGSRSGQSSRGERHGSSSGSSSSYGQHGSGSRQSLGHGQHGSGSGQSPSPSRGRHGSGSGQSSSYSPYGSGSGWSSSRGPYESGSSHSSGLGHRESRSGQSSGYGQHGSSSGHSSTHGQHGSTSGQSSSCGQHGASSGQSSSHGQHGSGSSQSSGYGRQGSGSGQSPGHGQRGSGSRQSPSYGRHGSGSGRSSSSGQHGSGLGESSGFGHHESSSGQSSSYSQHGSGSGHSSGYGQHGSRSGQSSRGERHGSSSRSSSRYGQHGSGSRQSSGHGRQGSGSGQSPSRGRHGSGLGHSSSHGQHGSGSGRSSSRGPYESRSGHSSVFGQHESGSGHSSAYSQHGSGSGHFCSQGQHGSTSGQSSTFDQEGSSTGQSSSHGQHGSGSSQSSSYGQQGSGSGQSPSRGRHGSGSGHSSSYGQHGSGSGWSSSSGRHGSGSGQSSGFGHHESSSWQSSGYTQHGSGSGHSSSYEQHGSRSGQSSRGEQHGSSSGSSSSYGQHGSGSRQSLGHGQHGSGSGQSPSPSRGRHGSGSGQSSSYGPYGSGSGWSSSRGPYESGSGHSSGLGHRESRSGQSSGYGQHGSSSGHSSTHGQHGSASGQSSSCGQHGASSGQSSSHGQHGSGSSQSSGYGRQGSGSGQSPGHGQRGSGSRQSPSYGRHGSGSGRSSSSGQHGPGLGESSGFGHHESSSGQSSSYSQHGSGSGHSSGYGQHGSRSGQSSRGERHGSSSGSSSRYGQHGSGSRQSSGHGRQGSGSGHSPSRGRHGSGSGHSSSHGQHGSGSGRSSSRGPYESRSGHSSVFGQHESGSGHSSAYSQHGSGSGHFCSQGQHGSTSGQSSTFDQEGSSTGQSSSHGQHGSGSSQSSSYGQQGSGSGQSPSRGRHGSGSGHSSSYGQHGSGSGWSSSSGRHGSGSGQSSGFGHHESSSWQSSGYTQHGSGSGHSSSYEQHGSRSGQSSRGERHGSSSGSSSSYGQHGSGSRQSLGHGQHGSGSGQSPSPSRGRHGSGSGQSSSYSPYGSGSGWSSSRGPYESGSGHSSGLGHRESRSGQSSGYGQHGSSSGHSSTHGQHGSTSGQSSSCGQHGASSGQSSSHGQHGSGSSQSSGYGRQGSGSGQSPGHGQRGSGSRQSPSYGRHGSGSGRSSSSGQHGSGLGESSGFGHHESSSGQSSSYSQHGSGSGHSSGYGQHGSRSGQSSRGERHGSSSGSSSHYGQHGSGSRQSSGHGRQGSGSGQSPSRGRHGSGLGHSSSHGQHGSGSGRSSSRGPYESRLGHSSVFGQHESGSGHSSAYSQHGSGSGHFCSQGQHGSTSGQSSTFDQEGSSTGQSSSYGHRGSGSSQSSGYGRHGAGSGQSLSHGRHGSGSGQSSSYGQHGSGSGQSSGYSQHGSGSGQDGYSYCKGGSNHDGGSSGSYFLSFPSSTSPYEYVQEQRCYFYQ</sequence>
<keyword id="KW-0106">Calcium</keyword>
<keyword id="KW-0217">Developmental protein</keyword>
<keyword id="KW-0417">Keratinization</keyword>
<keyword id="KW-0479">Metal-binding</keyword>
<keyword id="KW-0488">Methylation</keyword>
<keyword id="KW-0597">Phosphoprotein</keyword>
<keyword id="KW-1267">Proteomics identification</keyword>
<keyword id="KW-1185">Reference proteome</keyword>
<keyword id="KW-0677">Repeat</keyword>
<accession>Q86YZ3</accession>
<accession>Q5DT20</accession>
<accession>Q5U1F4</accession>
<comment type="function">
    <text evidence="6">Component of the epidermal cornified cell envelopes.</text>
</comment>
<comment type="subcellular location">
    <subcellularLocation>
        <location evidence="6">Cytoplasmic granule</location>
    </subcellularLocation>
    <text>Found in keratohyalin granules in the granular cells of the epidermis.</text>
</comment>
<comment type="tissue specificity">
    <text evidence="5 6">Expressed in cornified epidermis, psoriatic and regenerating skin after wounding. Found in the upper granular layer and in the entire cornified layer of epidermis.</text>
</comment>
<comment type="induction">
    <text evidence="7">By UV-B irradiation.</text>
</comment>
<comment type="PTM">
    <text evidence="1">Processed during the process of epidermal differentiation.</text>
</comment>
<comment type="PTM">
    <text evidence="6">Forms covalent cross-links mediated by transglutaminase TGM3, between glutamine and the epsilon-amino group of lysine residues (in vitro).</text>
</comment>
<comment type="similarity">
    <text evidence="9">Belongs to the S100-fused protein family.</text>
</comment>
<comment type="similarity">
    <text evidence="9">In the N-terminal section; belongs to the S-100 family.</text>
</comment>
<gene>
    <name type="primary">HRNR</name>
    <name type="synonym">S100A18</name>
</gene>
<feature type="chain" id="PRO_0000144038" description="Hornerin">
    <location>
        <begin position="1"/>
        <end position="2850"/>
    </location>
</feature>
<feature type="domain" description="EF-hand 1" evidence="9">
    <location>
        <begin position="13"/>
        <end position="48"/>
    </location>
</feature>
<feature type="domain" description="EF-hand 2" evidence="3">
    <location>
        <begin position="49"/>
        <end position="84"/>
    </location>
</feature>
<feature type="repeat" description="1">
    <location>
        <begin position="97"/>
        <end position="187"/>
    </location>
</feature>
<feature type="repeat" description="2">
    <location>
        <begin position="188"/>
        <end position="278"/>
    </location>
</feature>
<feature type="repeat" description="3">
    <location>
        <begin position="279"/>
        <end position="369"/>
    </location>
</feature>
<feature type="repeat" description="4">
    <location>
        <begin position="370"/>
        <end position="460"/>
    </location>
</feature>
<feature type="repeat" description="5">
    <location>
        <begin position="474"/>
        <end position="566"/>
    </location>
</feature>
<feature type="repeat" description="6">
    <location>
        <begin position="593"/>
        <end position="683"/>
    </location>
</feature>
<feature type="repeat" description="7">
    <location>
        <begin position="685"/>
        <end position="747"/>
    </location>
</feature>
<feature type="repeat" description="8">
    <location>
        <begin position="748"/>
        <end position="836"/>
    </location>
</feature>
<feature type="repeat" description="9">
    <location>
        <begin position="839"/>
        <end position="875"/>
    </location>
</feature>
<feature type="repeat" description="10">
    <location>
        <begin position="876"/>
        <end position="965"/>
    </location>
</feature>
<feature type="repeat" description="11">
    <location>
        <begin position="966"/>
        <end position="1004"/>
    </location>
</feature>
<feature type="repeat" description="12">
    <location>
        <begin position="1007"/>
        <end position="1097"/>
    </location>
</feature>
<feature type="repeat" description="13">
    <location>
        <begin position="1098"/>
        <end position="1188"/>
    </location>
</feature>
<feature type="repeat" description="14">
    <location>
        <begin position="1215"/>
        <end position="1305"/>
    </location>
</feature>
<feature type="repeat" description="15">
    <location>
        <begin position="1332"/>
        <end position="1422"/>
    </location>
</feature>
<feature type="repeat" description="16">
    <location>
        <begin position="1423"/>
        <end position="1474"/>
    </location>
</feature>
<feature type="repeat" description="17">
    <location>
        <begin position="1477"/>
        <end position="1567"/>
    </location>
</feature>
<feature type="repeat" description="18">
    <location>
        <begin position="1568"/>
        <end position="1658"/>
    </location>
</feature>
<feature type="repeat" description="19">
    <location>
        <begin position="1685"/>
        <end position="1775"/>
    </location>
</feature>
<feature type="repeat" description="20">
    <location>
        <begin position="1802"/>
        <end position="1892"/>
    </location>
</feature>
<feature type="repeat" description="21">
    <location>
        <begin position="1893"/>
        <end position="1944"/>
    </location>
</feature>
<feature type="repeat" description="22">
    <location>
        <begin position="1947"/>
        <end position="2037"/>
    </location>
</feature>
<feature type="repeat" description="23">
    <location>
        <begin position="2038"/>
        <end position="2128"/>
    </location>
</feature>
<feature type="repeat" description="24">
    <location>
        <begin position="2155"/>
        <end position="2245"/>
    </location>
</feature>
<feature type="repeat" description="25">
    <location>
        <begin position="2272"/>
        <end position="2362"/>
    </location>
</feature>
<feature type="repeat" description="26">
    <location>
        <begin position="2363"/>
        <end position="2414"/>
    </location>
</feature>
<feature type="repeat" description="27">
    <location>
        <begin position="2417"/>
        <end position="2507"/>
    </location>
</feature>
<feature type="repeat" description="28">
    <location>
        <begin position="2508"/>
        <end position="2598"/>
    </location>
</feature>
<feature type="repeat" description="29">
    <location>
        <begin position="2625"/>
        <end position="2715"/>
    </location>
</feature>
<feature type="repeat" description="30">
    <location>
        <begin position="2716"/>
        <end position="2806"/>
    </location>
</feature>
<feature type="region of interest" description="S-100-like">
    <location>
        <begin position="1"/>
        <end position="81"/>
    </location>
</feature>
<feature type="region of interest" description="Disordered" evidence="4">
    <location>
        <begin position="100"/>
        <end position="154"/>
    </location>
</feature>
<feature type="region of interest" description="Disordered" evidence="4">
    <location>
        <begin position="166"/>
        <end position="2817"/>
    </location>
</feature>
<feature type="compositionally biased region" description="Basic and acidic residues" evidence="4">
    <location>
        <begin position="100"/>
        <end position="110"/>
    </location>
</feature>
<feature type="compositionally biased region" description="Polar residues" evidence="4">
    <location>
        <begin position="125"/>
        <end position="144"/>
    </location>
</feature>
<feature type="compositionally biased region" description="Low complexity" evidence="4">
    <location>
        <begin position="167"/>
        <end position="192"/>
    </location>
</feature>
<feature type="compositionally biased region" description="Low complexity" evidence="4">
    <location>
        <begin position="226"/>
        <end position="248"/>
    </location>
</feature>
<feature type="compositionally biased region" description="Gly residues" evidence="4">
    <location>
        <begin position="249"/>
        <end position="259"/>
    </location>
</feature>
<feature type="compositionally biased region" description="Low complexity" evidence="4">
    <location>
        <begin position="276"/>
        <end position="308"/>
    </location>
</feature>
<feature type="compositionally biased region" description="Low complexity" evidence="4">
    <location>
        <begin position="317"/>
        <end position="421"/>
    </location>
</feature>
<feature type="compositionally biased region" description="Gly residues" evidence="4">
    <location>
        <begin position="422"/>
        <end position="433"/>
    </location>
</feature>
<feature type="compositionally biased region" description="Low complexity" evidence="4">
    <location>
        <begin position="449"/>
        <end position="465"/>
    </location>
</feature>
<feature type="compositionally biased region" description="Low complexity" evidence="4">
    <location>
        <begin position="473"/>
        <end position="482"/>
    </location>
</feature>
<feature type="compositionally biased region" description="Gly residues" evidence="4">
    <location>
        <begin position="483"/>
        <end position="493"/>
    </location>
</feature>
<feature type="compositionally biased region" description="Low complexity" evidence="4">
    <location>
        <begin position="494"/>
        <end position="529"/>
    </location>
</feature>
<feature type="compositionally biased region" description="Low complexity" evidence="4">
    <location>
        <begin position="555"/>
        <end position="661"/>
    </location>
</feature>
<feature type="compositionally biased region" description="Low complexity" evidence="4">
    <location>
        <begin position="670"/>
        <end position="724"/>
    </location>
</feature>
<feature type="compositionally biased region" description="Low complexity" evidence="4">
    <location>
        <begin position="732"/>
        <end position="765"/>
    </location>
</feature>
<feature type="compositionally biased region" description="Low complexity" evidence="4">
    <location>
        <begin position="782"/>
        <end position="806"/>
    </location>
</feature>
<feature type="compositionally biased region" description="Low complexity" evidence="4">
    <location>
        <begin position="818"/>
        <end position="871"/>
    </location>
</feature>
<feature type="compositionally biased region" description="Gly residues" evidence="4">
    <location>
        <begin position="884"/>
        <end position="900"/>
    </location>
</feature>
<feature type="compositionally biased region" description="Low complexity" evidence="4">
    <location>
        <begin position="901"/>
        <end position="921"/>
    </location>
</feature>
<feature type="compositionally biased region" description="Low complexity" evidence="4">
    <location>
        <begin position="931"/>
        <end position="996"/>
    </location>
</feature>
<feature type="compositionally biased region" description="Low complexity" evidence="4">
    <location>
        <begin position="1019"/>
        <end position="1050"/>
    </location>
</feature>
<feature type="compositionally biased region" description="Low complexity" evidence="4">
    <location>
        <begin position="1057"/>
        <end position="1115"/>
    </location>
</feature>
<feature type="compositionally biased region" description="Gly residues" evidence="4">
    <location>
        <begin position="1116"/>
        <end position="1132"/>
    </location>
</feature>
<feature type="compositionally biased region" description="Low complexity" evidence="4">
    <location>
        <begin position="1133"/>
        <end position="1156"/>
    </location>
</feature>
<feature type="compositionally biased region" description="Low complexity" evidence="4">
    <location>
        <begin position="1166"/>
        <end position="1184"/>
    </location>
</feature>
<feature type="compositionally biased region" description="Gly residues" evidence="4">
    <location>
        <begin position="1185"/>
        <end position="1195"/>
    </location>
</feature>
<feature type="compositionally biased region" description="Low complexity" evidence="4">
    <location>
        <begin position="1211"/>
        <end position="1232"/>
    </location>
</feature>
<feature type="compositionally biased region" description="Low complexity" evidence="4">
    <location>
        <begin position="1253"/>
        <end position="1276"/>
    </location>
</feature>
<feature type="compositionally biased region" description="Polar residues" evidence="4">
    <location>
        <begin position="1280"/>
        <end position="1301"/>
    </location>
</feature>
<feature type="compositionally biased region" description="Low complexity" evidence="4">
    <location>
        <begin position="1309"/>
        <end position="1322"/>
    </location>
</feature>
<feature type="compositionally biased region" description="Low complexity" evidence="4">
    <location>
        <begin position="1331"/>
        <end position="1349"/>
    </location>
</feature>
<feature type="compositionally biased region" description="Low complexity" evidence="4">
    <location>
        <begin position="1370"/>
        <end position="1390"/>
    </location>
</feature>
<feature type="compositionally biased region" description="Low complexity" evidence="4">
    <location>
        <begin position="1400"/>
        <end position="1438"/>
    </location>
</feature>
<feature type="compositionally biased region" description="Low complexity" evidence="4">
    <location>
        <begin position="1445"/>
        <end position="1466"/>
    </location>
</feature>
<feature type="compositionally biased region" description="Low complexity" evidence="4">
    <location>
        <begin position="1489"/>
        <end position="1520"/>
    </location>
</feature>
<feature type="compositionally biased region" description="Low complexity" evidence="4">
    <location>
        <begin position="1527"/>
        <end position="1585"/>
    </location>
</feature>
<feature type="compositionally biased region" description="Gly residues" evidence="4">
    <location>
        <begin position="1586"/>
        <end position="1602"/>
    </location>
</feature>
<feature type="compositionally biased region" description="Low complexity" evidence="4">
    <location>
        <begin position="1603"/>
        <end position="1626"/>
    </location>
</feature>
<feature type="compositionally biased region" description="Low complexity" evidence="4">
    <location>
        <begin position="1636"/>
        <end position="1654"/>
    </location>
</feature>
<feature type="compositionally biased region" description="Gly residues" evidence="4">
    <location>
        <begin position="1655"/>
        <end position="1665"/>
    </location>
</feature>
<feature type="compositionally biased region" description="Low complexity" evidence="4">
    <location>
        <begin position="1682"/>
        <end position="1702"/>
    </location>
</feature>
<feature type="compositionally biased region" description="Low complexity" evidence="4">
    <location>
        <begin position="1723"/>
        <end position="1746"/>
    </location>
</feature>
<feature type="compositionally biased region" description="Polar residues" evidence="4">
    <location>
        <begin position="1750"/>
        <end position="1771"/>
    </location>
</feature>
<feature type="compositionally biased region" description="Low complexity" evidence="4">
    <location>
        <begin position="1779"/>
        <end position="1831"/>
    </location>
</feature>
<feature type="compositionally biased region" description="Low complexity" evidence="4">
    <location>
        <begin position="1840"/>
        <end position="1860"/>
    </location>
</feature>
<feature type="compositionally biased region" description="Low complexity" evidence="4">
    <location>
        <begin position="1870"/>
        <end position="1936"/>
    </location>
</feature>
<feature type="compositionally biased region" description="Low complexity" evidence="4">
    <location>
        <begin position="1959"/>
        <end position="1990"/>
    </location>
</feature>
<feature type="compositionally biased region" description="Low complexity" evidence="4">
    <location>
        <begin position="1997"/>
        <end position="2055"/>
    </location>
</feature>
<feature type="compositionally biased region" description="Gly residues" evidence="4">
    <location>
        <begin position="2056"/>
        <end position="2072"/>
    </location>
</feature>
<feature type="compositionally biased region" description="Low complexity" evidence="4">
    <location>
        <begin position="2073"/>
        <end position="2096"/>
    </location>
</feature>
<feature type="compositionally biased region" description="Low complexity" evidence="4">
    <location>
        <begin position="2106"/>
        <end position="2124"/>
    </location>
</feature>
<feature type="compositionally biased region" description="Gly residues" evidence="4">
    <location>
        <begin position="2125"/>
        <end position="2135"/>
    </location>
</feature>
<feature type="compositionally biased region" description="Low complexity" evidence="4">
    <location>
        <begin position="2151"/>
        <end position="2172"/>
    </location>
</feature>
<feature type="compositionally biased region" description="Low complexity" evidence="4">
    <location>
        <begin position="2193"/>
        <end position="2216"/>
    </location>
</feature>
<feature type="compositionally biased region" description="Polar residues" evidence="4">
    <location>
        <begin position="2220"/>
        <end position="2241"/>
    </location>
</feature>
<feature type="compositionally biased region" description="Low complexity" evidence="4">
    <location>
        <begin position="2249"/>
        <end position="2301"/>
    </location>
</feature>
<feature type="compositionally biased region" description="Low complexity" evidence="4">
    <location>
        <begin position="2310"/>
        <end position="2330"/>
    </location>
</feature>
<feature type="compositionally biased region" description="Low complexity" evidence="4">
    <location>
        <begin position="2340"/>
        <end position="2378"/>
    </location>
</feature>
<feature type="compositionally biased region" description="Low complexity" evidence="4">
    <location>
        <begin position="2385"/>
        <end position="2406"/>
    </location>
</feature>
<feature type="compositionally biased region" description="Low complexity" evidence="4">
    <location>
        <begin position="2429"/>
        <end position="2460"/>
    </location>
</feature>
<feature type="compositionally biased region" description="Low complexity" evidence="4">
    <location>
        <begin position="2467"/>
        <end position="2525"/>
    </location>
</feature>
<feature type="compositionally biased region" description="Gly residues" evidence="4">
    <location>
        <begin position="2526"/>
        <end position="2542"/>
    </location>
</feature>
<feature type="compositionally biased region" description="Low complexity" evidence="4">
    <location>
        <begin position="2543"/>
        <end position="2566"/>
    </location>
</feature>
<feature type="compositionally biased region" description="Low complexity" evidence="4">
    <location>
        <begin position="2576"/>
        <end position="2594"/>
    </location>
</feature>
<feature type="compositionally biased region" description="Gly residues" evidence="4">
    <location>
        <begin position="2595"/>
        <end position="2605"/>
    </location>
</feature>
<feature type="compositionally biased region" description="Low complexity" evidence="4">
    <location>
        <begin position="2621"/>
        <end position="2642"/>
    </location>
</feature>
<feature type="compositionally biased region" description="Low complexity" evidence="4">
    <location>
        <begin position="2663"/>
        <end position="2682"/>
    </location>
</feature>
<feature type="compositionally biased region" description="Polar residues" evidence="4">
    <location>
        <begin position="2698"/>
        <end position="2711"/>
    </location>
</feature>
<feature type="compositionally biased region" description="Low complexity" evidence="4">
    <location>
        <begin position="2719"/>
        <end position="2732"/>
    </location>
</feature>
<feature type="compositionally biased region" description="Low complexity" evidence="4">
    <location>
        <begin position="2741"/>
        <end position="2759"/>
    </location>
</feature>
<feature type="compositionally biased region" description="Low complexity" evidence="4">
    <location>
        <begin position="2795"/>
        <end position="2816"/>
    </location>
</feature>
<feature type="binding site" evidence="9">
    <location>
        <position position="27"/>
    </location>
    <ligand>
        <name>Ca(2+)</name>
        <dbReference type="ChEBI" id="CHEBI:29108"/>
        <label>1</label>
    </ligand>
</feature>
<feature type="binding site" evidence="9">
    <location>
        <position position="32"/>
    </location>
    <ligand>
        <name>Ca(2+)</name>
        <dbReference type="ChEBI" id="CHEBI:29108"/>
        <label>1</label>
    </ligand>
</feature>
<feature type="binding site" evidence="3">
    <location>
        <position position="62"/>
    </location>
    <ligand>
        <name>Ca(2+)</name>
        <dbReference type="ChEBI" id="CHEBI:29108"/>
        <label>2</label>
    </ligand>
</feature>
<feature type="binding site" evidence="3">
    <location>
        <position position="64"/>
    </location>
    <ligand>
        <name>Ca(2+)</name>
        <dbReference type="ChEBI" id="CHEBI:29108"/>
        <label>2</label>
    </ligand>
</feature>
<feature type="binding site" evidence="3">
    <location>
        <position position="66"/>
    </location>
    <ligand>
        <name>Ca(2+)</name>
        <dbReference type="ChEBI" id="CHEBI:29108"/>
        <label>2</label>
    </ligand>
</feature>
<feature type="binding site" evidence="3">
    <location>
        <position position="68"/>
    </location>
    <ligand>
        <name>Ca(2+)</name>
        <dbReference type="ChEBI" id="CHEBI:29108"/>
        <label>2</label>
    </ligand>
</feature>
<feature type="binding site" evidence="3">
    <location>
        <position position="73"/>
    </location>
    <ligand>
        <name>Ca(2+)</name>
        <dbReference type="ChEBI" id="CHEBI:29108"/>
        <label>2</label>
    </ligand>
</feature>
<feature type="modified residue" description="Phosphoserine" evidence="11">
    <location>
        <position position="659"/>
    </location>
</feature>
<feature type="modified residue" description="Phosphoserine" evidence="11">
    <location>
        <position position="661"/>
    </location>
</feature>
<feature type="modified residue" description="Phosphoserine" evidence="10">
    <location>
        <position position="890"/>
    </location>
</feature>
<feature type="modified residue" description="Phosphoserine" evidence="11">
    <location>
        <position position="993"/>
    </location>
</feature>
<feature type="modified residue" description="Phosphoserine" evidence="11">
    <location>
        <position position="1008"/>
    </location>
</feature>
<feature type="modified residue" description="Omega-N-methylarginine" evidence="2">
    <location>
        <position position="1205"/>
    </location>
</feature>
<feature type="modified residue" description="Phosphoserine" evidence="11">
    <location>
        <position position="1463"/>
    </location>
</feature>
<feature type="modified residue" description="Phosphoserine" evidence="11">
    <location>
        <position position="1478"/>
    </location>
</feature>
<feature type="modified residue" description="Phosphoserine" evidence="11">
    <location>
        <position position="1712"/>
    </location>
</feature>
<feature type="modified residue" description="Phosphoserine" evidence="11">
    <location>
        <position position="1714"/>
    </location>
</feature>
<feature type="modified residue" description="Phosphoserine" evidence="11">
    <location>
        <position position="1829"/>
    </location>
</feature>
<feature type="modified residue" description="Phosphoserine" evidence="11">
    <location>
        <position position="1831"/>
    </location>
</feature>
<feature type="modified residue" description="Phosphoserine" evidence="11">
    <location>
        <position position="1933"/>
    </location>
</feature>
<feature type="modified residue" description="Phosphoserine" evidence="11">
    <location>
        <position position="1948"/>
    </location>
</feature>
<feature type="modified residue" description="Phosphoserine" evidence="11">
    <location>
        <position position="2299"/>
    </location>
</feature>
<feature type="modified residue" description="Phosphoserine" evidence="11">
    <location>
        <position position="2301"/>
    </location>
</feature>
<feature type="modified residue" description="Phosphoserine" evidence="11">
    <location>
        <position position="2403"/>
    </location>
</feature>
<feature type="modified residue" description="Phosphoserine" evidence="11">
    <location>
        <position position="2418"/>
    </location>
</feature>
<feature type="modified residue" description="Phosphoserine" evidence="11">
    <location>
        <position position="2652"/>
    </location>
</feature>
<feature type="modified residue" description="Phosphoserine" evidence="11">
    <location>
        <position position="2654"/>
    </location>
</feature>
<feature type="sequence variant" id="VAR_048494" description="In dbSNP:rs11204937." evidence="8">
    <original>R</original>
    <variation>H</variation>
    <location>
        <position position="85"/>
    </location>
</feature>
<feature type="sequence variant" id="VAR_061053" description="In dbSNP:rs57277761.">
    <original>R</original>
    <variation>W</variation>
    <location>
        <position position="122"/>
    </location>
</feature>
<feature type="sequence variant" id="VAR_048495" description="In dbSNP:rs12741518.">
    <original>G</original>
    <variation>D</variation>
    <location>
        <position position="167"/>
    </location>
</feature>
<feature type="sequence variant" id="VAR_059174" description="In dbSNP:rs7545406.">
    <original>H</original>
    <variation>Q</variation>
    <location>
        <position position="273"/>
    </location>
</feature>
<feature type="sequence variant" id="VAR_061054" description="In dbSNP:rs6587649.">
    <original>Q</original>
    <variation>R</variation>
    <location>
        <position position="376"/>
    </location>
</feature>
<feature type="sequence variant" id="VAR_061055" description="In dbSNP:rs6666097.">
    <original>G</original>
    <variation>D</variation>
    <location>
        <position position="427"/>
    </location>
</feature>
<feature type="sequence variant" id="VAR_048496" description="In dbSNP:rs6587648.">
    <original>E</original>
    <variation>G</variation>
    <location>
        <position position="473"/>
    </location>
</feature>
<feature type="sequence variant" id="VAR_048497" description="In dbSNP:rs6587647.">
    <original>G</original>
    <variation>R</variation>
    <location>
        <position position="492"/>
    </location>
</feature>
<feature type="sequence variant" id="VAR_061056" description="In dbSNP:rs41266134.">
    <original>Y</original>
    <variation>C</variation>
    <location>
        <position position="517"/>
    </location>
</feature>
<feature type="sequence variant" id="VAR_048498" description="In dbSNP:rs7520249.">
    <original>R</original>
    <variation>Q</variation>
    <location>
        <position position="664"/>
    </location>
</feature>
<feature type="sequence variant" id="VAR_048499" description="In dbSNP:rs6662450.">
    <original>S</original>
    <variation>T</variation>
    <location>
        <position position="799"/>
    </location>
</feature>
<feature type="sequence variant" id="VAR_059175" description="In dbSNP:rs78949172.">
    <original>S</original>
    <variation>G</variation>
    <location>
        <position position="2435"/>
    </location>
</feature>
<feature type="sequence variant" id="VAR_059176" description="In dbSNP:rs6659183.">
    <original>G</original>
    <variation>S</variation>
    <location>
        <position position="2461"/>
    </location>
</feature>
<feature type="sequence conflict" description="In Ref. 2; AAR91619." evidence="9" ref="2">
    <original>E</original>
    <variation>D</variation>
    <location>
        <position position="271"/>
    </location>
</feature>
<feature type="sequence conflict" description="In Ref. 1; BAC57496." evidence="9" ref="1">
    <original>R</original>
    <variation>Q</variation>
    <location>
        <position position="2382"/>
    </location>
</feature>
<feature type="sequence conflict" description="In Ref. 1; BAC57496." evidence="9" ref="1">
    <original>G</original>
    <variation>S</variation>
    <location>
        <position position="2539"/>
    </location>
</feature>
<feature type="sequence conflict" description="In Ref. 1; BAC57496." evidence="9" ref="1">
    <original>L</original>
    <variation>S</variation>
    <location>
        <position position="2688"/>
    </location>
</feature>
<feature type="sequence conflict" description="In Ref. 2; AAR91619." evidence="9" ref="2">
    <original>P</original>
    <variation>T</variation>
    <location>
        <position position="2837"/>
    </location>
</feature>
<evidence type="ECO:0000250" key="1"/>
<evidence type="ECO:0000250" key="2">
    <source>
        <dbReference type="UniProtKB" id="Q8VHD8"/>
    </source>
</evidence>
<evidence type="ECO:0000255" key="3">
    <source>
        <dbReference type="PROSITE-ProRule" id="PRU00448"/>
    </source>
</evidence>
<evidence type="ECO:0000256" key="4">
    <source>
        <dbReference type="SAM" id="MobiDB-lite"/>
    </source>
</evidence>
<evidence type="ECO:0000269" key="5">
    <source>
    </source>
</evidence>
<evidence type="ECO:0000269" key="6">
    <source>
    </source>
</evidence>
<evidence type="ECO:0000269" key="7">
    <source>
    </source>
</evidence>
<evidence type="ECO:0000269" key="8">
    <source ref="2"/>
</evidence>
<evidence type="ECO:0000305" key="9"/>
<evidence type="ECO:0007744" key="10">
    <source>
    </source>
</evidence>
<evidence type="ECO:0007744" key="11">
    <source>
    </source>
</evidence>
<reference key="1">
    <citation type="journal article" date="2005" name="J. Biol. Chem.">
        <title>Identification of human hornerin and its expression in regenerating and psoriatic skin.</title>
        <authorList>
            <person name="Takaishi M."/>
            <person name="Makino T."/>
            <person name="Morohashi M."/>
            <person name="Huh N.-H."/>
        </authorList>
    </citation>
    <scope>NUCLEOTIDE SEQUENCE [MRNA]</scope>
    <scope>TISSUE SPECIFICITY</scope>
    <source>
        <tissue>Skin</tissue>
    </source>
</reference>
<reference key="2">
    <citation type="submission" date="2003-09" db="EMBL/GenBank/DDBJ databases">
        <title>Human intermediate filament-associated protein family.</title>
        <authorList>
            <person name="Wu Z."/>
            <person name="Bartels J."/>
            <person name="Schroeder J.M."/>
        </authorList>
    </citation>
    <scope>NUCLEOTIDE SEQUENCE [MRNA]</scope>
    <scope>VARIANT HIS-85</scope>
    <source>
        <tissue>Skin</tissue>
    </source>
</reference>
<reference key="3">
    <citation type="journal article" date="2006" name="Nature">
        <title>The DNA sequence and biological annotation of human chromosome 1.</title>
        <authorList>
            <person name="Gregory S.G."/>
            <person name="Barlow K.F."/>
            <person name="McLay K.E."/>
            <person name="Kaul R."/>
            <person name="Swarbreck D."/>
            <person name="Dunham A."/>
            <person name="Scott C.E."/>
            <person name="Howe K.L."/>
            <person name="Woodfine K."/>
            <person name="Spencer C.C.A."/>
            <person name="Jones M.C."/>
            <person name="Gillson C."/>
            <person name="Searle S."/>
            <person name="Zhou Y."/>
            <person name="Kokocinski F."/>
            <person name="McDonald L."/>
            <person name="Evans R."/>
            <person name="Phillips K."/>
            <person name="Atkinson A."/>
            <person name="Cooper R."/>
            <person name="Jones C."/>
            <person name="Hall R.E."/>
            <person name="Andrews T.D."/>
            <person name="Lloyd C."/>
            <person name="Ainscough R."/>
            <person name="Almeida J.P."/>
            <person name="Ambrose K.D."/>
            <person name="Anderson F."/>
            <person name="Andrew R.W."/>
            <person name="Ashwell R.I.S."/>
            <person name="Aubin K."/>
            <person name="Babbage A.K."/>
            <person name="Bagguley C.L."/>
            <person name="Bailey J."/>
            <person name="Beasley H."/>
            <person name="Bethel G."/>
            <person name="Bird C.P."/>
            <person name="Bray-Allen S."/>
            <person name="Brown J.Y."/>
            <person name="Brown A.J."/>
            <person name="Buckley D."/>
            <person name="Burton J."/>
            <person name="Bye J."/>
            <person name="Carder C."/>
            <person name="Chapman J.C."/>
            <person name="Clark S.Y."/>
            <person name="Clarke G."/>
            <person name="Clee C."/>
            <person name="Cobley V."/>
            <person name="Collier R.E."/>
            <person name="Corby N."/>
            <person name="Coville G.J."/>
            <person name="Davies J."/>
            <person name="Deadman R."/>
            <person name="Dunn M."/>
            <person name="Earthrowl M."/>
            <person name="Ellington A.G."/>
            <person name="Errington H."/>
            <person name="Frankish A."/>
            <person name="Frankland J."/>
            <person name="French L."/>
            <person name="Garner P."/>
            <person name="Garnett J."/>
            <person name="Gay L."/>
            <person name="Ghori M.R.J."/>
            <person name="Gibson R."/>
            <person name="Gilby L.M."/>
            <person name="Gillett W."/>
            <person name="Glithero R.J."/>
            <person name="Grafham D.V."/>
            <person name="Griffiths C."/>
            <person name="Griffiths-Jones S."/>
            <person name="Grocock R."/>
            <person name="Hammond S."/>
            <person name="Harrison E.S.I."/>
            <person name="Hart E."/>
            <person name="Haugen E."/>
            <person name="Heath P.D."/>
            <person name="Holmes S."/>
            <person name="Holt K."/>
            <person name="Howden P.J."/>
            <person name="Hunt A.R."/>
            <person name="Hunt S.E."/>
            <person name="Hunter G."/>
            <person name="Isherwood J."/>
            <person name="James R."/>
            <person name="Johnson C."/>
            <person name="Johnson D."/>
            <person name="Joy A."/>
            <person name="Kay M."/>
            <person name="Kershaw J.K."/>
            <person name="Kibukawa M."/>
            <person name="Kimberley A.M."/>
            <person name="King A."/>
            <person name="Knights A.J."/>
            <person name="Lad H."/>
            <person name="Laird G."/>
            <person name="Lawlor S."/>
            <person name="Leongamornlert D.A."/>
            <person name="Lloyd D.M."/>
            <person name="Loveland J."/>
            <person name="Lovell J."/>
            <person name="Lush M.J."/>
            <person name="Lyne R."/>
            <person name="Martin S."/>
            <person name="Mashreghi-Mohammadi M."/>
            <person name="Matthews L."/>
            <person name="Matthews N.S.W."/>
            <person name="McLaren S."/>
            <person name="Milne S."/>
            <person name="Mistry S."/>
            <person name="Moore M.J.F."/>
            <person name="Nickerson T."/>
            <person name="O'Dell C.N."/>
            <person name="Oliver K."/>
            <person name="Palmeiri A."/>
            <person name="Palmer S.A."/>
            <person name="Parker A."/>
            <person name="Patel D."/>
            <person name="Pearce A.V."/>
            <person name="Peck A.I."/>
            <person name="Pelan S."/>
            <person name="Phelps K."/>
            <person name="Phillimore B.J."/>
            <person name="Plumb R."/>
            <person name="Rajan J."/>
            <person name="Raymond C."/>
            <person name="Rouse G."/>
            <person name="Saenphimmachak C."/>
            <person name="Sehra H.K."/>
            <person name="Sheridan E."/>
            <person name="Shownkeen R."/>
            <person name="Sims S."/>
            <person name="Skuce C.D."/>
            <person name="Smith M."/>
            <person name="Steward C."/>
            <person name="Subramanian S."/>
            <person name="Sycamore N."/>
            <person name="Tracey A."/>
            <person name="Tromans A."/>
            <person name="Van Helmond Z."/>
            <person name="Wall M."/>
            <person name="Wallis J.M."/>
            <person name="White S."/>
            <person name="Whitehead S.L."/>
            <person name="Wilkinson J.E."/>
            <person name="Willey D.L."/>
            <person name="Williams H."/>
            <person name="Wilming L."/>
            <person name="Wray P.W."/>
            <person name="Wu Z."/>
            <person name="Coulson A."/>
            <person name="Vaudin M."/>
            <person name="Sulston J.E."/>
            <person name="Durbin R.M."/>
            <person name="Hubbard T."/>
            <person name="Wooster R."/>
            <person name="Dunham I."/>
            <person name="Carter N.P."/>
            <person name="McVean G."/>
            <person name="Ross M.T."/>
            <person name="Harrow J."/>
            <person name="Olson M.V."/>
            <person name="Beck S."/>
            <person name="Rogers J."/>
            <person name="Bentley D.R."/>
        </authorList>
    </citation>
    <scope>NUCLEOTIDE SEQUENCE [LARGE SCALE GENOMIC DNA]</scope>
</reference>
<reference key="4">
    <citation type="journal article" date="2009" name="Mol. Cell. Proteomics">
        <title>Large-scale proteomics analysis of the human kinome.</title>
        <authorList>
            <person name="Oppermann F.S."/>
            <person name="Gnad F."/>
            <person name="Olsen J.V."/>
            <person name="Hornberger R."/>
            <person name="Greff Z."/>
            <person name="Keri G."/>
            <person name="Mann M."/>
            <person name="Daub H."/>
        </authorList>
    </citation>
    <scope>IDENTIFICATION BY MASS SPECTROMETRY [LARGE SCALE ANALYSIS]</scope>
</reference>
<reference key="5">
    <citation type="journal article" date="2009" name="Sci. Signal.">
        <title>Quantitative phosphoproteomic analysis of T cell receptor signaling reveals system-wide modulation of protein-protein interactions.</title>
        <authorList>
            <person name="Mayya V."/>
            <person name="Lundgren D.H."/>
            <person name="Hwang S.-I."/>
            <person name="Rezaul K."/>
            <person name="Wu L."/>
            <person name="Eng J.K."/>
            <person name="Rodionov V."/>
            <person name="Han D.K."/>
        </authorList>
    </citation>
    <scope>IDENTIFICATION BY MASS SPECTROMETRY [LARGE SCALE ANALYSIS]</scope>
    <source>
        <tissue>Leukemic T-cell</tissue>
    </source>
</reference>
<reference key="6">
    <citation type="journal article" date="2010" name="Sci. Signal.">
        <title>Quantitative phosphoproteomics reveals widespread full phosphorylation site occupancy during mitosis.</title>
        <authorList>
            <person name="Olsen J.V."/>
            <person name="Vermeulen M."/>
            <person name="Santamaria A."/>
            <person name="Kumar C."/>
            <person name="Miller M.L."/>
            <person name="Jensen L.J."/>
            <person name="Gnad F."/>
            <person name="Cox J."/>
            <person name="Jensen T.S."/>
            <person name="Nigg E.A."/>
            <person name="Brunak S."/>
            <person name="Mann M."/>
        </authorList>
    </citation>
    <scope>PHOSPHORYLATION [LARGE SCALE ANALYSIS] AT SER-890</scope>
    <scope>IDENTIFICATION BY MASS SPECTROMETRY [LARGE SCALE ANALYSIS]</scope>
    <source>
        <tissue>Cervix carcinoma</tissue>
    </source>
</reference>
<reference key="7">
    <citation type="journal article" date="2011" name="BMC Syst. Biol.">
        <title>Initial characterization of the human central proteome.</title>
        <authorList>
            <person name="Burkard T.R."/>
            <person name="Planyavsky M."/>
            <person name="Kaupe I."/>
            <person name="Breitwieser F.P."/>
            <person name="Buerckstuemmer T."/>
            <person name="Bennett K.L."/>
            <person name="Superti-Furga G."/>
            <person name="Colinge J."/>
        </authorList>
    </citation>
    <scope>IDENTIFICATION BY MASS SPECTROMETRY [LARGE SCALE ANALYSIS]</scope>
</reference>
<reference key="8">
    <citation type="journal article" date="2011" name="FASEB J.">
        <title>Hornerin is a component of the epidermal cornified cell envelopes.</title>
        <authorList>
            <person name="Henry J."/>
            <person name="Hsu C.Y."/>
            <person name="Haftek M."/>
            <person name="Nachat R."/>
            <person name="de Koning H.D."/>
            <person name="Gardinal-Galera I."/>
            <person name="Hitomi K."/>
            <person name="Balica S."/>
            <person name="Jean-Decoster C."/>
            <person name="Schmitt A.M."/>
            <person name="Paul C."/>
            <person name="Serre G."/>
            <person name="Simon M."/>
        </authorList>
    </citation>
    <scope>FUNCTION</scope>
    <scope>SUBCELLULAR LOCATION</scope>
    <scope>TRANSGLUTAMINATION</scope>
    <scope>TISSUE SPECIFICITY</scope>
</reference>
<reference key="9">
    <citation type="journal article" date="2014" name="Acta Histochem.">
        <title>Ultraviolet B irradiation induces the expression of hornerin in xenotransplanted human skin.</title>
        <authorList>
            <person name="Makino T."/>
            <person name="Yamakoshi T."/>
            <person name="Mizawa M."/>
            <person name="Shimizu T."/>
        </authorList>
    </citation>
    <scope>INDUCTION BY UV-B</scope>
</reference>
<reference key="10">
    <citation type="journal article" date="2014" name="J. Proteomics">
        <title>An enzyme assisted RP-RPLC approach for in-depth analysis of human liver phosphoproteome.</title>
        <authorList>
            <person name="Bian Y."/>
            <person name="Song C."/>
            <person name="Cheng K."/>
            <person name="Dong M."/>
            <person name="Wang F."/>
            <person name="Huang J."/>
            <person name="Sun D."/>
            <person name="Wang L."/>
            <person name="Ye M."/>
            <person name="Zou H."/>
        </authorList>
    </citation>
    <scope>PHOSPHORYLATION [LARGE SCALE ANALYSIS] AT SER-659; SER-661; SER-993; SER-1008; SER-1463; SER-1478; SER-1712; SER-1714; SER-1829; SER-1831; SER-1933; SER-1948; SER-2299; SER-2301; SER-2403; SER-2418; SER-2652 AND SER-2654</scope>
    <scope>IDENTIFICATION BY MASS SPECTROMETRY [LARGE SCALE ANALYSIS]</scope>
    <source>
        <tissue>Liver</tissue>
    </source>
</reference>
<dbReference type="EMBL" id="AB104446">
    <property type="protein sequence ID" value="BAC57496.1"/>
    <property type="molecule type" value="mRNA"/>
</dbReference>
<dbReference type="EMBL" id="BR000036">
    <property type="protein sequence ID" value="FAA00004.1"/>
    <property type="molecule type" value="mRNA"/>
</dbReference>
<dbReference type="EMBL" id="AY396741">
    <property type="protein sequence ID" value="AAR91619.1"/>
    <property type="molecule type" value="mRNA"/>
</dbReference>
<dbReference type="EMBL" id="AL589986">
    <property type="status" value="NOT_ANNOTATED_CDS"/>
    <property type="molecule type" value="Genomic_DNA"/>
</dbReference>
<dbReference type="CCDS" id="CCDS30859.1"/>
<dbReference type="RefSeq" id="NP_001009931.1">
    <property type="nucleotide sequence ID" value="NM_001009931.3"/>
</dbReference>
<dbReference type="SMR" id="Q86YZ3"/>
<dbReference type="BioGRID" id="132814">
    <property type="interactions" value="160"/>
</dbReference>
<dbReference type="FunCoup" id="Q86YZ3">
    <property type="interactions" value="310"/>
</dbReference>
<dbReference type="IntAct" id="Q86YZ3">
    <property type="interactions" value="45"/>
</dbReference>
<dbReference type="MINT" id="Q86YZ3"/>
<dbReference type="STRING" id="9606.ENSP00000357791"/>
<dbReference type="DrugBank" id="DB01593">
    <property type="generic name" value="Zinc"/>
</dbReference>
<dbReference type="DrugBank" id="DB14487">
    <property type="generic name" value="Zinc acetate"/>
</dbReference>
<dbReference type="GlyGen" id="Q86YZ3">
    <property type="glycosylation" value="5 sites, 1 O-linked glycan (5 sites)"/>
</dbReference>
<dbReference type="iPTMnet" id="Q86YZ3"/>
<dbReference type="PhosphoSitePlus" id="Q86YZ3"/>
<dbReference type="SwissPalm" id="Q86YZ3"/>
<dbReference type="BioMuta" id="HRNR"/>
<dbReference type="DMDM" id="45476906"/>
<dbReference type="jPOST" id="Q86YZ3"/>
<dbReference type="MassIVE" id="Q86YZ3"/>
<dbReference type="PaxDb" id="9606-ENSP00000357791"/>
<dbReference type="PeptideAtlas" id="Q86YZ3"/>
<dbReference type="ProteomicsDB" id="70490"/>
<dbReference type="Antibodypedia" id="34085">
    <property type="antibodies" value="90 antibodies from 20 providers"/>
</dbReference>
<dbReference type="DNASU" id="388697"/>
<dbReference type="Ensembl" id="ENST00000368801.4">
    <property type="protein sequence ID" value="ENSP00000357791.3"/>
    <property type="gene ID" value="ENSG00000197915.7"/>
</dbReference>
<dbReference type="GeneID" id="388697"/>
<dbReference type="KEGG" id="hsa:388697"/>
<dbReference type="MANE-Select" id="ENST00000368801.4">
    <property type="protein sequence ID" value="ENSP00000357791.3"/>
    <property type="RefSeq nucleotide sequence ID" value="NM_001009931.3"/>
    <property type="RefSeq protein sequence ID" value="NP_001009931.1"/>
</dbReference>
<dbReference type="UCSC" id="uc001ezt.3">
    <property type="organism name" value="human"/>
</dbReference>
<dbReference type="AGR" id="HGNC:20846"/>
<dbReference type="CTD" id="388697"/>
<dbReference type="DisGeNET" id="388697"/>
<dbReference type="GeneCards" id="HRNR"/>
<dbReference type="HGNC" id="HGNC:20846">
    <property type="gene designation" value="HRNR"/>
</dbReference>
<dbReference type="HPA" id="ENSG00000197915">
    <property type="expression patterns" value="Not detected"/>
</dbReference>
<dbReference type="MIM" id="616293">
    <property type="type" value="gene"/>
</dbReference>
<dbReference type="neXtProt" id="NX_Q86YZ3"/>
<dbReference type="OpenTargets" id="ENSG00000197915"/>
<dbReference type="PharmGKB" id="PA134936141"/>
<dbReference type="VEuPathDB" id="HostDB:ENSG00000197915"/>
<dbReference type="eggNOG" id="ENOG502QQH0">
    <property type="taxonomic scope" value="Eukaryota"/>
</dbReference>
<dbReference type="GeneTree" id="ENSGT00940000154467"/>
<dbReference type="HOGENOM" id="CLU_226653_0_0_1"/>
<dbReference type="InParanoid" id="Q86YZ3"/>
<dbReference type="OMA" id="CKRRAVH"/>
<dbReference type="OrthoDB" id="9909924at2759"/>
<dbReference type="PAN-GO" id="Q86YZ3">
    <property type="GO annotations" value="3 GO annotations based on evolutionary models"/>
</dbReference>
<dbReference type="TreeFam" id="TF338665"/>
<dbReference type="PathwayCommons" id="Q86YZ3"/>
<dbReference type="Reactome" id="R-HSA-6798695">
    <property type="pathway name" value="Neutrophil degranulation"/>
</dbReference>
<dbReference type="SignaLink" id="Q86YZ3"/>
<dbReference type="BioGRID-ORCS" id="388697">
    <property type="hits" value="3 hits in 1141 CRISPR screens"/>
</dbReference>
<dbReference type="GenomeRNAi" id="388697"/>
<dbReference type="Pharos" id="Q86YZ3">
    <property type="development level" value="Tbio"/>
</dbReference>
<dbReference type="PRO" id="PR:Q86YZ3"/>
<dbReference type="Proteomes" id="UP000005640">
    <property type="component" value="Chromosome 1"/>
</dbReference>
<dbReference type="RNAct" id="Q86YZ3">
    <property type="molecule type" value="protein"/>
</dbReference>
<dbReference type="Bgee" id="ENSG00000197915">
    <property type="expression patterns" value="Expressed in male germ line stem cell (sensu Vertebrata) in testis and 80 other cell types or tissues"/>
</dbReference>
<dbReference type="GO" id="GO:0035578">
    <property type="term" value="C:azurophil granule lumen"/>
    <property type="evidence" value="ECO:0000304"/>
    <property type="project" value="Reactome"/>
</dbReference>
<dbReference type="GO" id="GO:0062023">
    <property type="term" value="C:collagen-containing extracellular matrix"/>
    <property type="evidence" value="ECO:0007005"/>
    <property type="project" value="BHF-UCL"/>
</dbReference>
<dbReference type="GO" id="GO:0001533">
    <property type="term" value="C:cornified envelope"/>
    <property type="evidence" value="ECO:0000314"/>
    <property type="project" value="UniProtKB"/>
</dbReference>
<dbReference type="GO" id="GO:0005737">
    <property type="term" value="C:cytoplasm"/>
    <property type="evidence" value="ECO:0000314"/>
    <property type="project" value="UniProtKB"/>
</dbReference>
<dbReference type="GO" id="GO:0070062">
    <property type="term" value="C:extracellular exosome"/>
    <property type="evidence" value="ECO:0007005"/>
    <property type="project" value="UniProtKB"/>
</dbReference>
<dbReference type="GO" id="GO:0005576">
    <property type="term" value="C:extracellular region"/>
    <property type="evidence" value="ECO:0000304"/>
    <property type="project" value="Reactome"/>
</dbReference>
<dbReference type="GO" id="GO:0036457">
    <property type="term" value="C:keratohyalin granule"/>
    <property type="evidence" value="ECO:0000314"/>
    <property type="project" value="UniProtKB"/>
</dbReference>
<dbReference type="GO" id="GO:0005634">
    <property type="term" value="C:nucleus"/>
    <property type="evidence" value="ECO:0007005"/>
    <property type="project" value="UniProtKB"/>
</dbReference>
<dbReference type="GO" id="GO:0048471">
    <property type="term" value="C:perinuclear region of cytoplasm"/>
    <property type="evidence" value="ECO:0000314"/>
    <property type="project" value="UniProtKB"/>
</dbReference>
<dbReference type="GO" id="GO:0005509">
    <property type="term" value="F:calcium ion binding"/>
    <property type="evidence" value="ECO:0007669"/>
    <property type="project" value="InterPro"/>
</dbReference>
<dbReference type="GO" id="GO:0046914">
    <property type="term" value="F:transition metal ion binding"/>
    <property type="evidence" value="ECO:0007669"/>
    <property type="project" value="InterPro"/>
</dbReference>
<dbReference type="GO" id="GO:0043163">
    <property type="term" value="P:cell envelope organization"/>
    <property type="evidence" value="ECO:0000314"/>
    <property type="project" value="UniProtKB"/>
</dbReference>
<dbReference type="GO" id="GO:0061436">
    <property type="term" value="P:establishment of skin barrier"/>
    <property type="evidence" value="ECO:0000270"/>
    <property type="project" value="UniProtKB"/>
</dbReference>
<dbReference type="GO" id="GO:0031424">
    <property type="term" value="P:keratinization"/>
    <property type="evidence" value="ECO:0007669"/>
    <property type="project" value="UniProtKB-KW"/>
</dbReference>
<dbReference type="CDD" id="cd00213">
    <property type="entry name" value="S-100"/>
    <property type="match status" value="1"/>
</dbReference>
<dbReference type="FunFam" id="1.10.238.10:FF:000133">
    <property type="entry name" value="Filaggrin"/>
    <property type="match status" value="1"/>
</dbReference>
<dbReference type="Gene3D" id="1.10.238.10">
    <property type="entry name" value="EF-hand"/>
    <property type="match status" value="1"/>
</dbReference>
<dbReference type="InterPro" id="IPR011992">
    <property type="entry name" value="EF-hand-dom_pair"/>
</dbReference>
<dbReference type="InterPro" id="IPR018247">
    <property type="entry name" value="EF_Hand_1_Ca_BS"/>
</dbReference>
<dbReference type="InterPro" id="IPR002048">
    <property type="entry name" value="EF_hand_dom"/>
</dbReference>
<dbReference type="InterPro" id="IPR034325">
    <property type="entry name" value="S-100_dom"/>
</dbReference>
<dbReference type="InterPro" id="IPR052503">
    <property type="entry name" value="S100-fused_Epidermal_Struct"/>
</dbReference>
<dbReference type="InterPro" id="IPR001751">
    <property type="entry name" value="S100/CaBP7/8-like_CS"/>
</dbReference>
<dbReference type="InterPro" id="IPR013787">
    <property type="entry name" value="S100_Ca-bd_sub"/>
</dbReference>
<dbReference type="PANTHER" id="PTHR22571">
    <property type="entry name" value="FILAGGRIN-RELATED"/>
    <property type="match status" value="1"/>
</dbReference>
<dbReference type="PANTHER" id="PTHR22571:SF25">
    <property type="entry name" value="HORNERIN"/>
    <property type="match status" value="1"/>
</dbReference>
<dbReference type="Pfam" id="PF01023">
    <property type="entry name" value="S_100"/>
    <property type="match status" value="1"/>
</dbReference>
<dbReference type="SMART" id="SM01394">
    <property type="entry name" value="S_100"/>
    <property type="match status" value="1"/>
</dbReference>
<dbReference type="SUPFAM" id="SSF47473">
    <property type="entry name" value="EF-hand"/>
    <property type="match status" value="1"/>
</dbReference>
<dbReference type="PROSITE" id="PS00018">
    <property type="entry name" value="EF_HAND_1"/>
    <property type="match status" value="1"/>
</dbReference>
<dbReference type="PROSITE" id="PS50222">
    <property type="entry name" value="EF_HAND_2"/>
    <property type="match status" value="1"/>
</dbReference>
<dbReference type="PROSITE" id="PS00303">
    <property type="entry name" value="S100_CABP"/>
    <property type="match status" value="1"/>
</dbReference>